<comment type="function">
    <text evidence="1">Key enzyme in the regulation of glycerol uptake and metabolism. Catalyzes the phosphorylation of glycerol to yield sn-glycerol 3-phosphate.</text>
</comment>
<comment type="catalytic activity">
    <reaction evidence="1">
        <text>glycerol + ATP = sn-glycerol 3-phosphate + ADP + H(+)</text>
        <dbReference type="Rhea" id="RHEA:21644"/>
        <dbReference type="ChEBI" id="CHEBI:15378"/>
        <dbReference type="ChEBI" id="CHEBI:17754"/>
        <dbReference type="ChEBI" id="CHEBI:30616"/>
        <dbReference type="ChEBI" id="CHEBI:57597"/>
        <dbReference type="ChEBI" id="CHEBI:456216"/>
        <dbReference type="EC" id="2.7.1.30"/>
    </reaction>
</comment>
<comment type="activity regulation">
    <text evidence="1">Activated by phosphorylation and inhibited by fructose 1,6-bisphosphate (FBP).</text>
</comment>
<comment type="pathway">
    <text evidence="1">Polyol metabolism; glycerol degradation via glycerol kinase pathway; sn-glycerol 3-phosphate from glycerol: step 1/1.</text>
</comment>
<comment type="subunit">
    <text evidence="1">Homotetramer and homodimer (in equilibrium).</text>
</comment>
<comment type="similarity">
    <text evidence="1">Belongs to the FGGY kinase family.</text>
</comment>
<protein>
    <recommendedName>
        <fullName evidence="1">Glycerol kinase</fullName>
        <ecNumber evidence="1">2.7.1.30</ecNumber>
    </recommendedName>
    <alternativeName>
        <fullName evidence="1">ATP:glycerol 3-phosphotransferase</fullName>
    </alternativeName>
    <alternativeName>
        <fullName evidence="1">Glycerokinase</fullName>
        <shortName evidence="1">GK</shortName>
    </alternativeName>
</protein>
<sequence length="498" mass="54927">MGKYVVALDQGTTSSRAIIFDKEQNIVGVSQKEFTQIYPHEGWVEHNPLEIWSSQYGVLQEVLAKTNVTADEISAIGITNQRETTIVWDKNTGEPVYNAIVWQCRRTASIVDELKKDDEFAEYVKANTGLLLDAYFSGTKIKWILDNVEGAREKAEKGDLLFGTVDTWLVWKLTNGKVHVTDYTNASRTMLYNIKELRWDEKIINKLGIPTSMLPEVKNSSEVYGHTNLGGVGGVRVPISGMAGDQQCALFGQTCFEKGSAKNTYGTGCFLLMNTGEDMVLSKNGLVTTIAVGINDKIEYALEGSVFVGGAVIQWVRDELQFIHDAADSEYFAKKVEDNGGVYVVPAFVGLGAPYWDMYARGAIFGLTRGANRNHIIRAALESIAYQTNDLLTAMAEDAGCKLASLRVDGGASRNDLLMQFQADISNTQVLRPIITETTALGAAYLAGLAVGFWESKEEIATKWAISKSYGPTFERAKREKLNKGWKNAVSRVKGWAE</sequence>
<feature type="chain" id="PRO_1000098725" description="Glycerol kinase">
    <location>
        <begin position="1"/>
        <end position="498"/>
    </location>
</feature>
<feature type="binding site" evidence="1">
    <location>
        <position position="12"/>
    </location>
    <ligand>
        <name>ADP</name>
        <dbReference type="ChEBI" id="CHEBI:456216"/>
    </ligand>
</feature>
<feature type="binding site" evidence="1">
    <location>
        <position position="12"/>
    </location>
    <ligand>
        <name>ATP</name>
        <dbReference type="ChEBI" id="CHEBI:30616"/>
    </ligand>
</feature>
<feature type="binding site" evidence="1">
    <location>
        <position position="12"/>
    </location>
    <ligand>
        <name>sn-glycerol 3-phosphate</name>
        <dbReference type="ChEBI" id="CHEBI:57597"/>
    </ligand>
</feature>
<feature type="binding site" evidence="1">
    <location>
        <position position="13"/>
    </location>
    <ligand>
        <name>ATP</name>
        <dbReference type="ChEBI" id="CHEBI:30616"/>
    </ligand>
</feature>
<feature type="binding site" evidence="1">
    <location>
        <position position="14"/>
    </location>
    <ligand>
        <name>ATP</name>
        <dbReference type="ChEBI" id="CHEBI:30616"/>
    </ligand>
</feature>
<feature type="binding site" evidence="1">
    <location>
        <position position="16"/>
    </location>
    <ligand>
        <name>ADP</name>
        <dbReference type="ChEBI" id="CHEBI:456216"/>
    </ligand>
</feature>
<feature type="binding site" evidence="1">
    <location>
        <position position="82"/>
    </location>
    <ligand>
        <name>glycerol</name>
        <dbReference type="ChEBI" id="CHEBI:17754"/>
    </ligand>
</feature>
<feature type="binding site" evidence="1">
    <location>
        <position position="82"/>
    </location>
    <ligand>
        <name>sn-glycerol 3-phosphate</name>
        <dbReference type="ChEBI" id="CHEBI:57597"/>
    </ligand>
</feature>
<feature type="binding site" evidence="1">
    <location>
        <position position="83"/>
    </location>
    <ligand>
        <name>glycerol</name>
        <dbReference type="ChEBI" id="CHEBI:17754"/>
    </ligand>
</feature>
<feature type="binding site" evidence="1">
    <location>
        <position position="83"/>
    </location>
    <ligand>
        <name>sn-glycerol 3-phosphate</name>
        <dbReference type="ChEBI" id="CHEBI:57597"/>
    </ligand>
</feature>
<feature type="binding site" evidence="1">
    <location>
        <position position="135"/>
    </location>
    <ligand>
        <name>glycerol</name>
        <dbReference type="ChEBI" id="CHEBI:17754"/>
    </ligand>
</feature>
<feature type="binding site" evidence="1">
    <location>
        <position position="135"/>
    </location>
    <ligand>
        <name>sn-glycerol 3-phosphate</name>
        <dbReference type="ChEBI" id="CHEBI:57597"/>
    </ligand>
</feature>
<feature type="binding site" evidence="1">
    <location>
        <position position="245"/>
    </location>
    <ligand>
        <name>glycerol</name>
        <dbReference type="ChEBI" id="CHEBI:17754"/>
    </ligand>
</feature>
<feature type="binding site" evidence="1">
    <location>
        <position position="245"/>
    </location>
    <ligand>
        <name>sn-glycerol 3-phosphate</name>
        <dbReference type="ChEBI" id="CHEBI:57597"/>
    </ligand>
</feature>
<feature type="binding site" evidence="1">
    <location>
        <position position="246"/>
    </location>
    <ligand>
        <name>glycerol</name>
        <dbReference type="ChEBI" id="CHEBI:17754"/>
    </ligand>
</feature>
<feature type="binding site" evidence="1">
    <location>
        <position position="267"/>
    </location>
    <ligand>
        <name>ADP</name>
        <dbReference type="ChEBI" id="CHEBI:456216"/>
    </ligand>
</feature>
<feature type="binding site" evidence="1">
    <location>
        <position position="267"/>
    </location>
    <ligand>
        <name>ATP</name>
        <dbReference type="ChEBI" id="CHEBI:30616"/>
    </ligand>
</feature>
<feature type="binding site" evidence="1">
    <location>
        <position position="310"/>
    </location>
    <ligand>
        <name>ADP</name>
        <dbReference type="ChEBI" id="CHEBI:456216"/>
    </ligand>
</feature>
<feature type="binding site" evidence="1">
    <location>
        <position position="310"/>
    </location>
    <ligand>
        <name>ATP</name>
        <dbReference type="ChEBI" id="CHEBI:30616"/>
    </ligand>
</feature>
<feature type="binding site" evidence="1">
    <location>
        <position position="314"/>
    </location>
    <ligand>
        <name>ATP</name>
        <dbReference type="ChEBI" id="CHEBI:30616"/>
    </ligand>
</feature>
<feature type="binding site" evidence="1">
    <location>
        <position position="411"/>
    </location>
    <ligand>
        <name>ADP</name>
        <dbReference type="ChEBI" id="CHEBI:456216"/>
    </ligand>
</feature>
<feature type="binding site" evidence="1">
    <location>
        <position position="411"/>
    </location>
    <ligand>
        <name>ATP</name>
        <dbReference type="ChEBI" id="CHEBI:30616"/>
    </ligand>
</feature>
<feature type="binding site" evidence="1">
    <location>
        <position position="415"/>
    </location>
    <ligand>
        <name>ADP</name>
        <dbReference type="ChEBI" id="CHEBI:456216"/>
    </ligand>
</feature>
<gene>
    <name evidence="1" type="primary">glpK</name>
    <name type="ordered locus">CLL_A1043</name>
</gene>
<proteinExistence type="inferred from homology"/>
<evidence type="ECO:0000255" key="1">
    <source>
        <dbReference type="HAMAP-Rule" id="MF_00186"/>
    </source>
</evidence>
<accession>B2TN12</accession>
<organism>
    <name type="scientific">Clostridium botulinum (strain Eklund 17B / Type B)</name>
    <dbReference type="NCBI Taxonomy" id="935198"/>
    <lineage>
        <taxon>Bacteria</taxon>
        <taxon>Bacillati</taxon>
        <taxon>Bacillota</taxon>
        <taxon>Clostridia</taxon>
        <taxon>Eubacteriales</taxon>
        <taxon>Clostridiaceae</taxon>
        <taxon>Clostridium</taxon>
    </lineage>
</organism>
<name>GLPK_CLOBB</name>
<reference key="1">
    <citation type="submission" date="2008-04" db="EMBL/GenBank/DDBJ databases">
        <title>Complete sequence of Clostridium botulinum strain Eklund.</title>
        <authorList>
            <person name="Brinkac L.M."/>
            <person name="Brown J.L."/>
            <person name="Bruce D."/>
            <person name="Detter C."/>
            <person name="Munk C."/>
            <person name="Smith L.A."/>
            <person name="Smith T.J."/>
            <person name="Sutton G."/>
            <person name="Brettin T.S."/>
        </authorList>
    </citation>
    <scope>NUCLEOTIDE SEQUENCE [LARGE SCALE GENOMIC DNA]</scope>
    <source>
        <strain>Eklund 17B / Type B</strain>
    </source>
</reference>
<keyword id="KW-0067">ATP-binding</keyword>
<keyword id="KW-0319">Glycerol metabolism</keyword>
<keyword id="KW-0418">Kinase</keyword>
<keyword id="KW-0547">Nucleotide-binding</keyword>
<keyword id="KW-0808">Transferase</keyword>
<dbReference type="EC" id="2.7.1.30" evidence="1"/>
<dbReference type="EMBL" id="CP001056">
    <property type="protein sequence ID" value="ACD23779.1"/>
    <property type="molecule type" value="Genomic_DNA"/>
</dbReference>
<dbReference type="SMR" id="B2TN12"/>
<dbReference type="KEGG" id="cbk:CLL_A1043"/>
<dbReference type="PATRIC" id="fig|935198.13.peg.992"/>
<dbReference type="HOGENOM" id="CLU_009281_2_3_9"/>
<dbReference type="UniPathway" id="UPA00618">
    <property type="reaction ID" value="UER00672"/>
</dbReference>
<dbReference type="Proteomes" id="UP000001195">
    <property type="component" value="Chromosome"/>
</dbReference>
<dbReference type="GO" id="GO:0005829">
    <property type="term" value="C:cytosol"/>
    <property type="evidence" value="ECO:0007669"/>
    <property type="project" value="TreeGrafter"/>
</dbReference>
<dbReference type="GO" id="GO:0005524">
    <property type="term" value="F:ATP binding"/>
    <property type="evidence" value="ECO:0007669"/>
    <property type="project" value="UniProtKB-UniRule"/>
</dbReference>
<dbReference type="GO" id="GO:0004370">
    <property type="term" value="F:glycerol kinase activity"/>
    <property type="evidence" value="ECO:0000250"/>
    <property type="project" value="UniProtKB"/>
</dbReference>
<dbReference type="GO" id="GO:0019563">
    <property type="term" value="P:glycerol catabolic process"/>
    <property type="evidence" value="ECO:0007669"/>
    <property type="project" value="UniProtKB-UniRule"/>
</dbReference>
<dbReference type="GO" id="GO:0006071">
    <property type="term" value="P:glycerol metabolic process"/>
    <property type="evidence" value="ECO:0000250"/>
    <property type="project" value="UniProtKB"/>
</dbReference>
<dbReference type="GO" id="GO:0006072">
    <property type="term" value="P:glycerol-3-phosphate metabolic process"/>
    <property type="evidence" value="ECO:0007669"/>
    <property type="project" value="InterPro"/>
</dbReference>
<dbReference type="CDD" id="cd07786">
    <property type="entry name" value="FGGY_EcGK_like"/>
    <property type="match status" value="1"/>
</dbReference>
<dbReference type="FunFam" id="3.30.420.40:FF:000007">
    <property type="entry name" value="Glycerol kinase"/>
    <property type="match status" value="1"/>
</dbReference>
<dbReference type="FunFam" id="3.30.420.40:FF:000008">
    <property type="entry name" value="Glycerol kinase"/>
    <property type="match status" value="1"/>
</dbReference>
<dbReference type="Gene3D" id="3.30.420.40">
    <property type="match status" value="2"/>
</dbReference>
<dbReference type="HAMAP" id="MF_00186">
    <property type="entry name" value="Glycerol_kin"/>
    <property type="match status" value="1"/>
</dbReference>
<dbReference type="InterPro" id="IPR043129">
    <property type="entry name" value="ATPase_NBD"/>
</dbReference>
<dbReference type="InterPro" id="IPR000577">
    <property type="entry name" value="Carb_kinase_FGGY"/>
</dbReference>
<dbReference type="InterPro" id="IPR018483">
    <property type="entry name" value="Carb_kinase_FGGY_CS"/>
</dbReference>
<dbReference type="InterPro" id="IPR018485">
    <property type="entry name" value="FGGY_C"/>
</dbReference>
<dbReference type="InterPro" id="IPR018484">
    <property type="entry name" value="FGGY_N"/>
</dbReference>
<dbReference type="InterPro" id="IPR005999">
    <property type="entry name" value="Glycerol_kin"/>
</dbReference>
<dbReference type="NCBIfam" id="TIGR01311">
    <property type="entry name" value="glycerol_kin"/>
    <property type="match status" value="1"/>
</dbReference>
<dbReference type="NCBIfam" id="NF000756">
    <property type="entry name" value="PRK00047.1"/>
    <property type="match status" value="1"/>
</dbReference>
<dbReference type="PANTHER" id="PTHR10196:SF69">
    <property type="entry name" value="GLYCEROL KINASE"/>
    <property type="match status" value="1"/>
</dbReference>
<dbReference type="PANTHER" id="PTHR10196">
    <property type="entry name" value="SUGAR KINASE"/>
    <property type="match status" value="1"/>
</dbReference>
<dbReference type="Pfam" id="PF02782">
    <property type="entry name" value="FGGY_C"/>
    <property type="match status" value="1"/>
</dbReference>
<dbReference type="Pfam" id="PF00370">
    <property type="entry name" value="FGGY_N"/>
    <property type="match status" value="1"/>
</dbReference>
<dbReference type="PIRSF" id="PIRSF000538">
    <property type="entry name" value="GlpK"/>
    <property type="match status" value="1"/>
</dbReference>
<dbReference type="SUPFAM" id="SSF53067">
    <property type="entry name" value="Actin-like ATPase domain"/>
    <property type="match status" value="2"/>
</dbReference>
<dbReference type="PROSITE" id="PS00933">
    <property type="entry name" value="FGGY_KINASES_1"/>
    <property type="match status" value="1"/>
</dbReference>
<dbReference type="PROSITE" id="PS00445">
    <property type="entry name" value="FGGY_KINASES_2"/>
    <property type="match status" value="1"/>
</dbReference>